<sequence>MLSKQISNLNSSSNKPKILSLFSGCGGLDLGFHQAGCETVWANDFSHWACESFRKNIGDVIVEGDIEQINPNDPTIPDCDIILGGFPCQDFSMIWKQPGLEGERGNLYKSFLRFVNAKKPKVFVAENVKGLLTANKKKAIQQIITDFENCGYYVQANVYNFAEFGVPQFRERVLIVGVRLDTGFDFRHPEPTHNETGENGLKPYVTAGQAISNIPQNASNNELLKISDKTRRMLELIPEGGNFTDIPKDHPLYVKGMISHVYRRMHRNEPSKTIIAAGGGGTWGYHFPEPRAFTNRERARLQSFPDDFEFVGSTTEVRRQIGNAVPPQGVVELAKSILPIFSDNYEKVDLHEKLVEEKEILFHDRLSKIRGGKQ</sequence>
<dbReference type="EC" id="2.1.1.37"/>
<dbReference type="EMBL" id="U43736">
    <property type="protein sequence ID" value="AAA86270.1"/>
    <property type="molecule type" value="Genomic_DNA"/>
</dbReference>
<dbReference type="PIR" id="T10165">
    <property type="entry name" value="T10165"/>
</dbReference>
<dbReference type="SMR" id="Q59606"/>
<dbReference type="REBASE" id="162055">
    <property type="entry name" value="M.BsuBS38ORF584P"/>
</dbReference>
<dbReference type="REBASE" id="296184">
    <property type="entry name" value="M.Bve83ORF3864P"/>
</dbReference>
<dbReference type="REBASE" id="3611">
    <property type="entry name" value="M.NgoFVII"/>
</dbReference>
<dbReference type="REBASE" id="767833">
    <property type="entry name" value="M1.SspSPORF1906P"/>
</dbReference>
<dbReference type="PRO" id="PR:Q59606"/>
<dbReference type="GO" id="GO:0003886">
    <property type="term" value="F:DNA (cytosine-5-)-methyltransferase activity"/>
    <property type="evidence" value="ECO:0007669"/>
    <property type="project" value="UniProtKB-EC"/>
</dbReference>
<dbReference type="GO" id="GO:0003677">
    <property type="term" value="F:DNA binding"/>
    <property type="evidence" value="ECO:0007669"/>
    <property type="project" value="UniProtKB-KW"/>
</dbReference>
<dbReference type="GO" id="GO:0009307">
    <property type="term" value="P:DNA restriction-modification system"/>
    <property type="evidence" value="ECO:0007669"/>
    <property type="project" value="UniProtKB-KW"/>
</dbReference>
<dbReference type="GO" id="GO:0032259">
    <property type="term" value="P:methylation"/>
    <property type="evidence" value="ECO:0007669"/>
    <property type="project" value="UniProtKB-KW"/>
</dbReference>
<dbReference type="GO" id="GO:0044027">
    <property type="term" value="P:negative regulation of gene expression via chromosomal CpG island methylation"/>
    <property type="evidence" value="ECO:0007669"/>
    <property type="project" value="TreeGrafter"/>
</dbReference>
<dbReference type="CDD" id="cd00315">
    <property type="entry name" value="Cyt_C5_DNA_methylase"/>
    <property type="match status" value="1"/>
</dbReference>
<dbReference type="Gene3D" id="3.90.120.10">
    <property type="entry name" value="DNA Methylase, subunit A, domain 2"/>
    <property type="match status" value="1"/>
</dbReference>
<dbReference type="Gene3D" id="3.40.50.150">
    <property type="entry name" value="Vaccinia Virus protein VP39"/>
    <property type="match status" value="1"/>
</dbReference>
<dbReference type="InterPro" id="IPR050390">
    <property type="entry name" value="C5-Methyltransferase"/>
</dbReference>
<dbReference type="InterPro" id="IPR018117">
    <property type="entry name" value="C5_DNA_meth_AS"/>
</dbReference>
<dbReference type="InterPro" id="IPR001525">
    <property type="entry name" value="C5_MeTfrase"/>
</dbReference>
<dbReference type="InterPro" id="IPR029063">
    <property type="entry name" value="SAM-dependent_MTases_sf"/>
</dbReference>
<dbReference type="NCBIfam" id="TIGR00675">
    <property type="entry name" value="dcm"/>
    <property type="match status" value="1"/>
</dbReference>
<dbReference type="PANTHER" id="PTHR10629">
    <property type="entry name" value="CYTOSINE-SPECIFIC METHYLTRANSFERASE"/>
    <property type="match status" value="1"/>
</dbReference>
<dbReference type="PANTHER" id="PTHR10629:SF52">
    <property type="entry name" value="DNA (CYTOSINE-5)-METHYLTRANSFERASE 1"/>
    <property type="match status" value="1"/>
</dbReference>
<dbReference type="Pfam" id="PF00145">
    <property type="entry name" value="DNA_methylase"/>
    <property type="match status" value="1"/>
</dbReference>
<dbReference type="PRINTS" id="PR00105">
    <property type="entry name" value="C5METTRFRASE"/>
</dbReference>
<dbReference type="SUPFAM" id="SSF53335">
    <property type="entry name" value="S-adenosyl-L-methionine-dependent methyltransferases"/>
    <property type="match status" value="1"/>
</dbReference>
<dbReference type="PROSITE" id="PS00094">
    <property type="entry name" value="C5_MTASE_1"/>
    <property type="match status" value="1"/>
</dbReference>
<dbReference type="PROSITE" id="PS51679">
    <property type="entry name" value="SAM_MT_C5"/>
    <property type="match status" value="1"/>
</dbReference>
<name>MTF7_NEIGO</name>
<organism>
    <name type="scientific">Neisseria gonorrhoeae</name>
    <dbReference type="NCBI Taxonomy" id="485"/>
    <lineage>
        <taxon>Bacteria</taxon>
        <taxon>Pseudomonadati</taxon>
        <taxon>Pseudomonadota</taxon>
        <taxon>Betaproteobacteria</taxon>
        <taxon>Neisseriales</taxon>
        <taxon>Neisseriaceae</taxon>
        <taxon>Neisseria</taxon>
    </lineage>
</organism>
<comment type="function">
    <text evidence="3 5">A methylase, recognizes the double-stranded sequence 5'-GCSGC-3', methylates C-5 on both strands, and protects the DNA from cleavage by the NgoFVII endonuclease.</text>
</comment>
<comment type="catalytic activity">
    <reaction evidence="2">
        <text>a 2'-deoxycytidine in DNA + S-adenosyl-L-methionine = a 5-methyl-2'-deoxycytidine in DNA + S-adenosyl-L-homocysteine + H(+)</text>
        <dbReference type="Rhea" id="RHEA:13681"/>
        <dbReference type="Rhea" id="RHEA-COMP:11369"/>
        <dbReference type="Rhea" id="RHEA-COMP:11370"/>
        <dbReference type="ChEBI" id="CHEBI:15378"/>
        <dbReference type="ChEBI" id="CHEBI:57856"/>
        <dbReference type="ChEBI" id="CHEBI:59789"/>
        <dbReference type="ChEBI" id="CHEBI:85452"/>
        <dbReference type="ChEBI" id="CHEBI:85454"/>
        <dbReference type="EC" id="2.1.1.37"/>
    </reaction>
</comment>
<comment type="similarity">
    <text evidence="1">Belongs to the class I-like SAM-binding methyltransferase superfamily. C5-methyltransferase family.</text>
</comment>
<feature type="chain" id="PRO_0000087898" description="Type II methyltransferase M.NgoFVII">
    <location>
        <begin position="1"/>
        <end position="374"/>
    </location>
</feature>
<feature type="domain" description="SAM-dependent MTase C5-type" evidence="1">
    <location>
        <begin position="16"/>
        <end position="344"/>
    </location>
</feature>
<feature type="active site" evidence="1 2">
    <location>
        <position position="88"/>
    </location>
</feature>
<protein>
    <recommendedName>
        <fullName evidence="3">Type II methyltransferase M.NgoFVII</fullName>
        <shortName evidence="3">M.NgoFVII</shortName>
        <ecNumber>2.1.1.37</ecNumber>
    </recommendedName>
    <alternativeName>
        <fullName>Cytosine-specific methyltransferase NgoFVII</fullName>
    </alternativeName>
    <alternativeName>
        <fullName>Modification methylase NgoFVII</fullName>
    </alternativeName>
</protein>
<keyword id="KW-0238">DNA-binding</keyword>
<keyword id="KW-0489">Methyltransferase</keyword>
<keyword id="KW-0680">Restriction system</keyword>
<keyword id="KW-0949">S-adenosyl-L-methionine</keyword>
<keyword id="KW-0808">Transferase</keyword>
<gene>
    <name type="primary">ngoFVIIM</name>
    <name evidence="4" type="synonym">dcmG</name>
</gene>
<evidence type="ECO:0000255" key="1">
    <source>
        <dbReference type="PROSITE-ProRule" id="PRU01016"/>
    </source>
</evidence>
<evidence type="ECO:0000255" key="2">
    <source>
        <dbReference type="PROSITE-ProRule" id="PRU10018"/>
    </source>
</evidence>
<evidence type="ECO:0000303" key="3">
    <source>
    </source>
</evidence>
<evidence type="ECO:0000303" key="4">
    <source>
    </source>
</evidence>
<evidence type="ECO:0000305" key="5">
    <source>
    </source>
</evidence>
<proteinExistence type="inferred from homology"/>
<accession>Q59606</accession>
<reference key="1">
    <citation type="journal article" date="1995" name="Gene">
        <title>Restriction and modification systems of Neisseria gonorrhoeae.</title>
        <authorList>
            <person name="Stein D.C."/>
            <person name="Gunn J.S."/>
            <person name="Radlinska M."/>
            <person name="Piekarowicz A."/>
        </authorList>
    </citation>
    <scope>NUCLEOTIDE SEQUENCE [GENOMIC DNA]</scope>
    <scope>FUNCTION</scope>
    <source>
        <strain>1291C</strain>
    </source>
</reference>
<reference key="2">
    <citation type="journal article" date="2003" name="Nucleic Acids Res.">
        <title>A nomenclature for restriction enzymes, DNA methyltransferases, homing endonucleases and their genes.</title>
        <authorList>
            <person name="Roberts R.J."/>
            <person name="Belfort M."/>
            <person name="Bestor T."/>
            <person name="Bhagwat A.S."/>
            <person name="Bickle T.A."/>
            <person name="Bitinaite J."/>
            <person name="Blumenthal R.M."/>
            <person name="Degtyarev S.K."/>
            <person name="Dryden D.T."/>
            <person name="Dybvig K."/>
            <person name="Firman K."/>
            <person name="Gromova E.S."/>
            <person name="Gumport R.I."/>
            <person name="Halford S.E."/>
            <person name="Hattman S."/>
            <person name="Heitman J."/>
            <person name="Hornby D.P."/>
            <person name="Janulaitis A."/>
            <person name="Jeltsch A."/>
            <person name="Josephsen J."/>
            <person name="Kiss A."/>
            <person name="Klaenhammer T.R."/>
            <person name="Kobayashi I."/>
            <person name="Kong H."/>
            <person name="Krueger D.H."/>
            <person name="Lacks S."/>
            <person name="Marinus M.G."/>
            <person name="Miyahara M."/>
            <person name="Morgan R.D."/>
            <person name="Murray N.E."/>
            <person name="Nagaraja V."/>
            <person name="Piekarowicz A."/>
            <person name="Pingoud A."/>
            <person name="Raleigh E."/>
            <person name="Rao D.N."/>
            <person name="Reich N."/>
            <person name="Repin V.E."/>
            <person name="Selker E.U."/>
            <person name="Shaw P.C."/>
            <person name="Stein D.C."/>
            <person name="Stoddard B.L."/>
            <person name="Szybalski W."/>
            <person name="Trautner T.A."/>
            <person name="Van Etten J.L."/>
            <person name="Vitor J.M."/>
            <person name="Wilson G.G."/>
            <person name="Xu S.Y."/>
        </authorList>
    </citation>
    <scope>NOMENCLATURE</scope>
</reference>